<feature type="chain" id="PRO_1000001599" description="Recombination protein RecR">
    <location>
        <begin position="1"/>
        <end position="199"/>
    </location>
</feature>
<feature type="domain" description="Toprim" evidence="1">
    <location>
        <begin position="81"/>
        <end position="176"/>
    </location>
</feature>
<feature type="zinc finger region" description="C4-type" evidence="1">
    <location>
        <begin position="58"/>
        <end position="73"/>
    </location>
</feature>
<evidence type="ECO:0000255" key="1">
    <source>
        <dbReference type="HAMAP-Rule" id="MF_00017"/>
    </source>
</evidence>
<gene>
    <name evidence="1" type="primary">recR</name>
    <name type="ordered locus">Rxyl_0510</name>
</gene>
<proteinExistence type="inferred from homology"/>
<comment type="function">
    <text evidence="1">May play a role in DNA repair. It seems to be involved in an RecBC-independent recombinational process of DNA repair. It may act with RecF and RecO.</text>
</comment>
<comment type="similarity">
    <text evidence="1">Belongs to the RecR family.</text>
</comment>
<accession>Q1AYP4</accession>
<sequence>MATYARSVERLIAELSRLPTIGPRSAQRIAFHIIRTRKEEALALAEALREVKERIRPCRRCFNLTEGEECDICRDPRRDRSVICVVEDPYDIGPIERTGEYRGLYHVLGGALSPLDGVEPEDLRIAELVERVRSEGTRELILATNPNTTGEATAMFIAQEVRELPVRVTALASGLPVGGDLEYADEVTLGRAFAGRREL</sequence>
<reference key="1">
    <citation type="submission" date="2006-06" db="EMBL/GenBank/DDBJ databases">
        <title>Complete sequence of Rubrobacter xylanophilus DSM 9941.</title>
        <authorList>
            <consortium name="US DOE Joint Genome Institute"/>
            <person name="Copeland A."/>
            <person name="Lucas S."/>
            <person name="Lapidus A."/>
            <person name="Barry K."/>
            <person name="Detter J.C."/>
            <person name="Glavina del Rio T."/>
            <person name="Hammon N."/>
            <person name="Israni S."/>
            <person name="Dalin E."/>
            <person name="Tice H."/>
            <person name="Pitluck S."/>
            <person name="Munk A.C."/>
            <person name="Brettin T."/>
            <person name="Bruce D."/>
            <person name="Han C."/>
            <person name="Tapia R."/>
            <person name="Gilna P."/>
            <person name="Schmutz J."/>
            <person name="Larimer F."/>
            <person name="Land M."/>
            <person name="Hauser L."/>
            <person name="Kyrpides N."/>
            <person name="Lykidis A."/>
            <person name="da Costa M.S."/>
            <person name="Rainey F.A."/>
            <person name="Empadinhas N."/>
            <person name="Jolivet E."/>
            <person name="Battista J.R."/>
            <person name="Richardson P."/>
        </authorList>
    </citation>
    <scope>NUCLEOTIDE SEQUENCE [LARGE SCALE GENOMIC DNA]</scope>
    <source>
        <strain>DSM 9941 / JCM 11954 / NBRC 16129 / PRD-1</strain>
    </source>
</reference>
<name>RECR_RUBXD</name>
<organism>
    <name type="scientific">Rubrobacter xylanophilus (strain DSM 9941 / JCM 11954 / NBRC 16129 / PRD-1)</name>
    <dbReference type="NCBI Taxonomy" id="266117"/>
    <lineage>
        <taxon>Bacteria</taxon>
        <taxon>Bacillati</taxon>
        <taxon>Actinomycetota</taxon>
        <taxon>Rubrobacteria</taxon>
        <taxon>Rubrobacterales</taxon>
        <taxon>Rubrobacteraceae</taxon>
        <taxon>Rubrobacter</taxon>
    </lineage>
</organism>
<protein>
    <recommendedName>
        <fullName evidence="1">Recombination protein RecR</fullName>
    </recommendedName>
</protein>
<dbReference type="EMBL" id="CP000386">
    <property type="protein sequence ID" value="ABG03484.1"/>
    <property type="molecule type" value="Genomic_DNA"/>
</dbReference>
<dbReference type="RefSeq" id="WP_011563502.1">
    <property type="nucleotide sequence ID" value="NC_008148.1"/>
</dbReference>
<dbReference type="SMR" id="Q1AYP4"/>
<dbReference type="STRING" id="266117.Rxyl_0510"/>
<dbReference type="KEGG" id="rxy:Rxyl_0510"/>
<dbReference type="eggNOG" id="COG0353">
    <property type="taxonomic scope" value="Bacteria"/>
</dbReference>
<dbReference type="HOGENOM" id="CLU_060739_1_0_11"/>
<dbReference type="OrthoDB" id="9802672at2"/>
<dbReference type="PhylomeDB" id="Q1AYP4"/>
<dbReference type="Proteomes" id="UP000006637">
    <property type="component" value="Chromosome"/>
</dbReference>
<dbReference type="GO" id="GO:0003677">
    <property type="term" value="F:DNA binding"/>
    <property type="evidence" value="ECO:0007669"/>
    <property type="project" value="UniProtKB-UniRule"/>
</dbReference>
<dbReference type="GO" id="GO:0008270">
    <property type="term" value="F:zinc ion binding"/>
    <property type="evidence" value="ECO:0007669"/>
    <property type="project" value="UniProtKB-KW"/>
</dbReference>
<dbReference type="GO" id="GO:0006310">
    <property type="term" value="P:DNA recombination"/>
    <property type="evidence" value="ECO:0007669"/>
    <property type="project" value="UniProtKB-UniRule"/>
</dbReference>
<dbReference type="GO" id="GO:0006281">
    <property type="term" value="P:DNA repair"/>
    <property type="evidence" value="ECO:0007669"/>
    <property type="project" value="UniProtKB-UniRule"/>
</dbReference>
<dbReference type="CDD" id="cd01025">
    <property type="entry name" value="TOPRIM_recR"/>
    <property type="match status" value="1"/>
</dbReference>
<dbReference type="Gene3D" id="3.30.60.80">
    <property type="match status" value="1"/>
</dbReference>
<dbReference type="Gene3D" id="3.40.1360.10">
    <property type="match status" value="1"/>
</dbReference>
<dbReference type="Gene3D" id="6.10.250.240">
    <property type="match status" value="1"/>
</dbReference>
<dbReference type="Gene3D" id="1.10.8.420">
    <property type="entry name" value="RecR Domain 1"/>
    <property type="match status" value="1"/>
</dbReference>
<dbReference type="HAMAP" id="MF_00017">
    <property type="entry name" value="RecR"/>
    <property type="match status" value="1"/>
</dbReference>
<dbReference type="InterPro" id="IPR000093">
    <property type="entry name" value="DNA_Rcmb_RecR"/>
</dbReference>
<dbReference type="InterPro" id="IPR023627">
    <property type="entry name" value="Rcmb_RecR"/>
</dbReference>
<dbReference type="InterPro" id="IPR015967">
    <property type="entry name" value="Rcmb_RecR_Znf"/>
</dbReference>
<dbReference type="InterPro" id="IPR006171">
    <property type="entry name" value="TOPRIM_dom"/>
</dbReference>
<dbReference type="InterPro" id="IPR034137">
    <property type="entry name" value="TOPRIM_RecR"/>
</dbReference>
<dbReference type="NCBIfam" id="TIGR00615">
    <property type="entry name" value="recR"/>
    <property type="match status" value="1"/>
</dbReference>
<dbReference type="PANTHER" id="PTHR30446">
    <property type="entry name" value="RECOMBINATION PROTEIN RECR"/>
    <property type="match status" value="1"/>
</dbReference>
<dbReference type="PANTHER" id="PTHR30446:SF0">
    <property type="entry name" value="RECOMBINATION PROTEIN RECR"/>
    <property type="match status" value="1"/>
</dbReference>
<dbReference type="Pfam" id="PF21175">
    <property type="entry name" value="RecR_C"/>
    <property type="match status" value="1"/>
</dbReference>
<dbReference type="Pfam" id="PF21176">
    <property type="entry name" value="RecR_HhH"/>
    <property type="match status" value="1"/>
</dbReference>
<dbReference type="Pfam" id="PF02132">
    <property type="entry name" value="RecR_ZnF"/>
    <property type="match status" value="1"/>
</dbReference>
<dbReference type="Pfam" id="PF13662">
    <property type="entry name" value="Toprim_4"/>
    <property type="match status" value="1"/>
</dbReference>
<dbReference type="SMART" id="SM00493">
    <property type="entry name" value="TOPRIM"/>
    <property type="match status" value="1"/>
</dbReference>
<dbReference type="SUPFAM" id="SSF111304">
    <property type="entry name" value="Recombination protein RecR"/>
    <property type="match status" value="1"/>
</dbReference>
<dbReference type="PROSITE" id="PS01300">
    <property type="entry name" value="RECR"/>
    <property type="match status" value="1"/>
</dbReference>
<dbReference type="PROSITE" id="PS50880">
    <property type="entry name" value="TOPRIM"/>
    <property type="match status" value="1"/>
</dbReference>
<keyword id="KW-0227">DNA damage</keyword>
<keyword id="KW-0233">DNA recombination</keyword>
<keyword id="KW-0234">DNA repair</keyword>
<keyword id="KW-0479">Metal-binding</keyword>
<keyword id="KW-1185">Reference proteome</keyword>
<keyword id="KW-0862">Zinc</keyword>
<keyword id="KW-0863">Zinc-finger</keyword>